<evidence type="ECO:0000255" key="1">
    <source>
        <dbReference type="HAMAP-Rule" id="MF_00384"/>
    </source>
</evidence>
<gene>
    <name evidence="1" type="primary">thrB</name>
    <name type="ordered locus">BH3420</name>
</gene>
<accession>Q9K7E4</accession>
<protein>
    <recommendedName>
        <fullName evidence="1">Homoserine kinase</fullName>
        <shortName evidence="1">HK</shortName>
        <shortName evidence="1">HSK</shortName>
        <ecNumber evidence="1">2.7.1.39</ecNumber>
    </recommendedName>
</protein>
<comment type="function">
    <text evidence="1">Catalyzes the ATP-dependent phosphorylation of L-homoserine to L-homoserine phosphate.</text>
</comment>
<comment type="catalytic activity">
    <reaction evidence="1">
        <text>L-homoserine + ATP = O-phospho-L-homoserine + ADP + H(+)</text>
        <dbReference type="Rhea" id="RHEA:13985"/>
        <dbReference type="ChEBI" id="CHEBI:15378"/>
        <dbReference type="ChEBI" id="CHEBI:30616"/>
        <dbReference type="ChEBI" id="CHEBI:57476"/>
        <dbReference type="ChEBI" id="CHEBI:57590"/>
        <dbReference type="ChEBI" id="CHEBI:456216"/>
        <dbReference type="EC" id="2.7.1.39"/>
    </reaction>
</comment>
<comment type="pathway">
    <text evidence="1">Amino-acid biosynthesis; L-threonine biosynthesis; L-threonine from L-aspartate: step 4/5.</text>
</comment>
<comment type="subcellular location">
    <subcellularLocation>
        <location evidence="1">Cytoplasm</location>
    </subcellularLocation>
</comment>
<comment type="similarity">
    <text evidence="1">Belongs to the GHMP kinase family. Homoserine kinase subfamily.</text>
</comment>
<organism>
    <name type="scientific">Halalkalibacterium halodurans (strain ATCC BAA-125 / DSM 18197 / FERM 7344 / JCM 9153 / C-125)</name>
    <name type="common">Bacillus halodurans</name>
    <dbReference type="NCBI Taxonomy" id="272558"/>
    <lineage>
        <taxon>Bacteria</taxon>
        <taxon>Bacillati</taxon>
        <taxon>Bacillota</taxon>
        <taxon>Bacilli</taxon>
        <taxon>Bacillales</taxon>
        <taxon>Bacillaceae</taxon>
        <taxon>Halalkalibacterium (ex Joshi et al. 2022)</taxon>
    </lineage>
</organism>
<reference key="1">
    <citation type="journal article" date="2000" name="Nucleic Acids Res.">
        <title>Complete genome sequence of the alkaliphilic bacterium Bacillus halodurans and genomic sequence comparison with Bacillus subtilis.</title>
        <authorList>
            <person name="Takami H."/>
            <person name="Nakasone K."/>
            <person name="Takaki Y."/>
            <person name="Maeno G."/>
            <person name="Sasaki R."/>
            <person name="Masui N."/>
            <person name="Fuji F."/>
            <person name="Hirama C."/>
            <person name="Nakamura Y."/>
            <person name="Ogasawara N."/>
            <person name="Kuhara S."/>
            <person name="Horikoshi K."/>
        </authorList>
    </citation>
    <scope>NUCLEOTIDE SEQUENCE [LARGE SCALE GENOMIC DNA]</scope>
    <source>
        <strain>ATCC BAA-125 / DSM 18197 / FERM 7344 / JCM 9153 / C-125</strain>
    </source>
</reference>
<sequence length="309" mass="33451">MTLPFQITVPGSSANLGPGFDSVGLAVNRYLTLTVTEGSEWHFSTQSADLVGIPSGKENLVYQVAEHVASQLEKTLPPCHVQMESNIPLARGLGSSAAAIVAGIELANQLLGQPLAAEDKVRFGSLWEGHPDNIAPSVYGGLVIGTHLSTETHVIHGGVPDLDLVLLVPKEELLTKKARGILPESLSYKEAVRGSSVSNVLVAALLKENWELVGEMMVRDVFHHPYRLGLVPHLQEVIRYVKEETEAYGAALSGAGPTMLCLSPKGRGEWVQKQLQKQYPQFEVDVLKPDDQGIQVHRVLSNQQQLPIG</sequence>
<feature type="chain" id="PRO_0000156551" description="Homoserine kinase">
    <location>
        <begin position="1"/>
        <end position="309"/>
    </location>
</feature>
<feature type="binding site" evidence="1">
    <location>
        <begin position="88"/>
        <end position="98"/>
    </location>
    <ligand>
        <name>ATP</name>
        <dbReference type="ChEBI" id="CHEBI:30616"/>
    </ligand>
</feature>
<dbReference type="EC" id="2.7.1.39" evidence="1"/>
<dbReference type="EMBL" id="BA000004">
    <property type="protein sequence ID" value="BAB07139.1"/>
    <property type="molecule type" value="Genomic_DNA"/>
</dbReference>
<dbReference type="PIR" id="D84077">
    <property type="entry name" value="D84077"/>
</dbReference>
<dbReference type="RefSeq" id="WP_010899558.1">
    <property type="nucleotide sequence ID" value="NC_002570.2"/>
</dbReference>
<dbReference type="SMR" id="Q9K7E4"/>
<dbReference type="STRING" id="272558.gene:10729333"/>
<dbReference type="KEGG" id="bha:BH3420"/>
<dbReference type="eggNOG" id="COG0083">
    <property type="taxonomic scope" value="Bacteria"/>
</dbReference>
<dbReference type="HOGENOM" id="CLU_041243_0_0_9"/>
<dbReference type="OrthoDB" id="9769912at2"/>
<dbReference type="UniPathway" id="UPA00050">
    <property type="reaction ID" value="UER00064"/>
</dbReference>
<dbReference type="Proteomes" id="UP000001258">
    <property type="component" value="Chromosome"/>
</dbReference>
<dbReference type="GO" id="GO:0005737">
    <property type="term" value="C:cytoplasm"/>
    <property type="evidence" value="ECO:0007669"/>
    <property type="project" value="UniProtKB-SubCell"/>
</dbReference>
<dbReference type="GO" id="GO:0005524">
    <property type="term" value="F:ATP binding"/>
    <property type="evidence" value="ECO:0007669"/>
    <property type="project" value="UniProtKB-UniRule"/>
</dbReference>
<dbReference type="GO" id="GO:0004413">
    <property type="term" value="F:homoserine kinase activity"/>
    <property type="evidence" value="ECO:0007669"/>
    <property type="project" value="UniProtKB-UniRule"/>
</dbReference>
<dbReference type="GO" id="GO:0009088">
    <property type="term" value="P:threonine biosynthetic process"/>
    <property type="evidence" value="ECO:0007669"/>
    <property type="project" value="UniProtKB-UniRule"/>
</dbReference>
<dbReference type="Gene3D" id="3.30.230.10">
    <property type="match status" value="1"/>
</dbReference>
<dbReference type="Gene3D" id="3.30.70.890">
    <property type="entry name" value="GHMP kinase, C-terminal domain"/>
    <property type="match status" value="1"/>
</dbReference>
<dbReference type="HAMAP" id="MF_00384">
    <property type="entry name" value="Homoser_kinase"/>
    <property type="match status" value="1"/>
</dbReference>
<dbReference type="InterPro" id="IPR013750">
    <property type="entry name" value="GHMP_kinase_C_dom"/>
</dbReference>
<dbReference type="InterPro" id="IPR036554">
    <property type="entry name" value="GHMP_kinase_C_sf"/>
</dbReference>
<dbReference type="InterPro" id="IPR006204">
    <property type="entry name" value="GHMP_kinase_N_dom"/>
</dbReference>
<dbReference type="InterPro" id="IPR006203">
    <property type="entry name" value="GHMP_knse_ATP-bd_CS"/>
</dbReference>
<dbReference type="InterPro" id="IPR000870">
    <property type="entry name" value="Homoserine_kinase"/>
</dbReference>
<dbReference type="InterPro" id="IPR020568">
    <property type="entry name" value="Ribosomal_Su5_D2-typ_SF"/>
</dbReference>
<dbReference type="InterPro" id="IPR014721">
    <property type="entry name" value="Ribsml_uS5_D2-typ_fold_subgr"/>
</dbReference>
<dbReference type="NCBIfam" id="TIGR00191">
    <property type="entry name" value="thrB"/>
    <property type="match status" value="1"/>
</dbReference>
<dbReference type="PANTHER" id="PTHR20861:SF1">
    <property type="entry name" value="HOMOSERINE KINASE"/>
    <property type="match status" value="1"/>
</dbReference>
<dbReference type="PANTHER" id="PTHR20861">
    <property type="entry name" value="HOMOSERINE/4-DIPHOSPHOCYTIDYL-2-C-METHYL-D-ERYTHRITOL KINASE"/>
    <property type="match status" value="1"/>
</dbReference>
<dbReference type="Pfam" id="PF08544">
    <property type="entry name" value="GHMP_kinases_C"/>
    <property type="match status" value="1"/>
</dbReference>
<dbReference type="Pfam" id="PF00288">
    <property type="entry name" value="GHMP_kinases_N"/>
    <property type="match status" value="1"/>
</dbReference>
<dbReference type="PIRSF" id="PIRSF000676">
    <property type="entry name" value="Homoser_kin"/>
    <property type="match status" value="1"/>
</dbReference>
<dbReference type="PRINTS" id="PR00958">
    <property type="entry name" value="HOMSERKINASE"/>
</dbReference>
<dbReference type="SUPFAM" id="SSF55060">
    <property type="entry name" value="GHMP Kinase, C-terminal domain"/>
    <property type="match status" value="1"/>
</dbReference>
<dbReference type="SUPFAM" id="SSF54211">
    <property type="entry name" value="Ribosomal protein S5 domain 2-like"/>
    <property type="match status" value="1"/>
</dbReference>
<dbReference type="PROSITE" id="PS00627">
    <property type="entry name" value="GHMP_KINASES_ATP"/>
    <property type="match status" value="1"/>
</dbReference>
<name>KHSE_HALH5</name>
<keyword id="KW-0028">Amino-acid biosynthesis</keyword>
<keyword id="KW-0067">ATP-binding</keyword>
<keyword id="KW-0963">Cytoplasm</keyword>
<keyword id="KW-0418">Kinase</keyword>
<keyword id="KW-0547">Nucleotide-binding</keyword>
<keyword id="KW-1185">Reference proteome</keyword>
<keyword id="KW-0791">Threonine biosynthesis</keyword>
<keyword id="KW-0808">Transferase</keyword>
<proteinExistence type="inferred from homology"/>